<keyword id="KW-0028">Amino-acid biosynthesis</keyword>
<keyword id="KW-0055">Arginine biosynthesis</keyword>
<keyword id="KW-0067">ATP-binding</keyword>
<keyword id="KW-0963">Cytoplasm</keyword>
<keyword id="KW-0315">Glutamine amidotransferase</keyword>
<keyword id="KW-0436">Ligase</keyword>
<keyword id="KW-0496">Mitochondrion</keyword>
<keyword id="KW-0547">Nucleotide-binding</keyword>
<keyword id="KW-1185">Reference proteome</keyword>
<keyword id="KW-0809">Transit peptide</keyword>
<feature type="transit peptide" description="Mitochondrion" evidence="3">
    <location>
        <begin position="1"/>
        <end position="17"/>
    </location>
</feature>
<feature type="chain" id="PRO_0000290599" description="Carbamoyl phosphate synthase arginine-specific small chain">
    <location>
        <begin position="18"/>
        <end position="415"/>
    </location>
</feature>
<feature type="domain" description="Glutamine amidotransferase type-1" evidence="4">
    <location>
        <begin position="225"/>
        <end position="412"/>
    </location>
</feature>
<feature type="active site" description="Nucleophile" evidence="4">
    <location>
        <position position="301"/>
    </location>
</feature>
<feature type="active site" evidence="4">
    <location>
        <position position="385"/>
    </location>
</feature>
<feature type="active site" evidence="4">
    <location>
        <position position="387"/>
    </location>
</feature>
<feature type="binding site" evidence="1">
    <location>
        <position position="88"/>
    </location>
    <ligand>
        <name>L-glutamine</name>
        <dbReference type="ChEBI" id="CHEBI:58359"/>
    </ligand>
</feature>
<feature type="binding site" evidence="1">
    <location>
        <position position="272"/>
    </location>
    <ligand>
        <name>L-glutamine</name>
        <dbReference type="ChEBI" id="CHEBI:58359"/>
    </ligand>
</feature>
<feature type="binding site" evidence="1">
    <location>
        <position position="274"/>
    </location>
    <ligand>
        <name>L-glutamine</name>
        <dbReference type="ChEBI" id="CHEBI:58359"/>
    </ligand>
</feature>
<feature type="binding site" evidence="1">
    <location>
        <position position="302"/>
    </location>
    <ligand>
        <name>L-glutamine</name>
        <dbReference type="ChEBI" id="CHEBI:58359"/>
    </ligand>
</feature>
<feature type="binding site" evidence="1">
    <location>
        <position position="305"/>
    </location>
    <ligand>
        <name>L-glutamine</name>
        <dbReference type="ChEBI" id="CHEBI:58359"/>
    </ligand>
</feature>
<feature type="binding site" evidence="1">
    <location>
        <position position="343"/>
    </location>
    <ligand>
        <name>L-glutamine</name>
        <dbReference type="ChEBI" id="CHEBI:58359"/>
    </ligand>
</feature>
<feature type="binding site" evidence="1">
    <location>
        <position position="345"/>
    </location>
    <ligand>
        <name>L-glutamine</name>
        <dbReference type="ChEBI" id="CHEBI:58359"/>
    </ligand>
</feature>
<feature type="binding site" evidence="1">
    <location>
        <position position="346"/>
    </location>
    <ligand>
        <name>L-glutamine</name>
        <dbReference type="ChEBI" id="CHEBI:58359"/>
    </ligand>
</feature>
<sequence length="415" mass="45662">MLRFLKPFPLRFGKRFYSKVPPVTNHERILPKQPSFPTAPAQNEIATLTIRNGPIFHGTSFGANRNVSGEAVFTTSPVGYVESLTDPSYKQQILIFTQPLIGNYGVPDCKKRDENGLLRHFESPHIQCAGVVVNDYATKYSHWTAVESLGEWCAREGVAAITGVDTRAIVTFLREQGSSLAKISIGEEYDANDDEAFINPEEVNLVSQVSTREPFFVSGGDGMLNIAVIDCGVKENILRSLVSRGASVTVFPFDYPIQNVASNYDGIFLTNGPGDPTHLTKTVNNLRELMNTYNGPIMGICMGHQLLALSTGAKTIKLKYGNRGHNIPALDIASGNCHITSQNHGYAVDASTLPAEWKATWTNLNDQSNEGIAHVSRPISSVQFHPEARGGPMDTFYLFDNYIKEAIKYQKSRTA</sequence>
<reference key="1">
    <citation type="journal article" date="2002" name="Nature">
        <title>The genome sequence of Schizosaccharomyces pombe.</title>
        <authorList>
            <person name="Wood V."/>
            <person name="Gwilliam R."/>
            <person name="Rajandream M.A."/>
            <person name="Lyne M.H."/>
            <person name="Lyne R."/>
            <person name="Stewart A."/>
            <person name="Sgouros J.G."/>
            <person name="Peat N."/>
            <person name="Hayles J."/>
            <person name="Baker S.G."/>
            <person name="Basham D."/>
            <person name="Bowman S."/>
            <person name="Brooks K."/>
            <person name="Brown D."/>
            <person name="Brown S."/>
            <person name="Chillingworth T."/>
            <person name="Churcher C.M."/>
            <person name="Collins M."/>
            <person name="Connor R."/>
            <person name="Cronin A."/>
            <person name="Davis P."/>
            <person name="Feltwell T."/>
            <person name="Fraser A."/>
            <person name="Gentles S."/>
            <person name="Goble A."/>
            <person name="Hamlin N."/>
            <person name="Harris D.E."/>
            <person name="Hidalgo J."/>
            <person name="Hodgson G."/>
            <person name="Holroyd S."/>
            <person name="Hornsby T."/>
            <person name="Howarth S."/>
            <person name="Huckle E.J."/>
            <person name="Hunt S."/>
            <person name="Jagels K."/>
            <person name="James K.D."/>
            <person name="Jones L."/>
            <person name="Jones M."/>
            <person name="Leather S."/>
            <person name="McDonald S."/>
            <person name="McLean J."/>
            <person name="Mooney P."/>
            <person name="Moule S."/>
            <person name="Mungall K.L."/>
            <person name="Murphy L.D."/>
            <person name="Niblett D."/>
            <person name="Odell C."/>
            <person name="Oliver K."/>
            <person name="O'Neil S."/>
            <person name="Pearson D."/>
            <person name="Quail M.A."/>
            <person name="Rabbinowitsch E."/>
            <person name="Rutherford K.M."/>
            <person name="Rutter S."/>
            <person name="Saunders D."/>
            <person name="Seeger K."/>
            <person name="Sharp S."/>
            <person name="Skelton J."/>
            <person name="Simmonds M.N."/>
            <person name="Squares R."/>
            <person name="Squares S."/>
            <person name="Stevens K."/>
            <person name="Taylor K."/>
            <person name="Taylor R.G."/>
            <person name="Tivey A."/>
            <person name="Walsh S.V."/>
            <person name="Warren T."/>
            <person name="Whitehead S."/>
            <person name="Woodward J.R."/>
            <person name="Volckaert G."/>
            <person name="Aert R."/>
            <person name="Robben J."/>
            <person name="Grymonprez B."/>
            <person name="Weltjens I."/>
            <person name="Vanstreels E."/>
            <person name="Rieger M."/>
            <person name="Schaefer M."/>
            <person name="Mueller-Auer S."/>
            <person name="Gabel C."/>
            <person name="Fuchs M."/>
            <person name="Duesterhoeft A."/>
            <person name="Fritzc C."/>
            <person name="Holzer E."/>
            <person name="Moestl D."/>
            <person name="Hilbert H."/>
            <person name="Borzym K."/>
            <person name="Langer I."/>
            <person name="Beck A."/>
            <person name="Lehrach H."/>
            <person name="Reinhardt R."/>
            <person name="Pohl T.M."/>
            <person name="Eger P."/>
            <person name="Zimmermann W."/>
            <person name="Wedler H."/>
            <person name="Wambutt R."/>
            <person name="Purnelle B."/>
            <person name="Goffeau A."/>
            <person name="Cadieu E."/>
            <person name="Dreano S."/>
            <person name="Gloux S."/>
            <person name="Lelaure V."/>
            <person name="Mottier S."/>
            <person name="Galibert F."/>
            <person name="Aves S.J."/>
            <person name="Xiang Z."/>
            <person name="Hunt C."/>
            <person name="Moore K."/>
            <person name="Hurst S.M."/>
            <person name="Lucas M."/>
            <person name="Rochet M."/>
            <person name="Gaillardin C."/>
            <person name="Tallada V.A."/>
            <person name="Garzon A."/>
            <person name="Thode G."/>
            <person name="Daga R.R."/>
            <person name="Cruzado L."/>
            <person name="Jimenez J."/>
            <person name="Sanchez M."/>
            <person name="del Rey F."/>
            <person name="Benito J."/>
            <person name="Dominguez A."/>
            <person name="Revuelta J.L."/>
            <person name="Moreno S."/>
            <person name="Armstrong J."/>
            <person name="Forsburg S.L."/>
            <person name="Cerutti L."/>
            <person name="Lowe T."/>
            <person name="McCombie W.R."/>
            <person name="Paulsen I."/>
            <person name="Potashkin J."/>
            <person name="Shpakovski G.V."/>
            <person name="Ussery D."/>
            <person name="Barrell B.G."/>
            <person name="Nurse P."/>
        </authorList>
    </citation>
    <scope>NUCLEOTIDE SEQUENCE [LARGE SCALE GENOMIC DNA]</scope>
    <source>
        <strain>972 / ATCC 24843</strain>
    </source>
</reference>
<reference key="2">
    <citation type="journal article" date="1977" name="Eur. J. Biochem.">
        <title>Change in location of ornithine carbamoyltransferase and carbamoylphosphate synthetase among yeasts in relation to the arginase/ornithine carbamoyltransferase regulatory complex and the energy status of the cells.</title>
        <authorList>
            <person name="Urrestarazu L.A."/>
            <person name="Vissers S."/>
            <person name="Wiame J.M."/>
        </authorList>
    </citation>
    <scope>SUBCELLULAR LOCATION</scope>
</reference>
<reference key="3">
    <citation type="journal article" date="1985" name="Curr. Genet.">
        <title>Genetical evidence of carbamoylphosphate compartmentation in Schizosaccharomyces pombe and Schizosaccharomyces japonicus.</title>
        <authorList>
            <person name="Vissers S."/>
            <person name="Thuriaux P."/>
        </authorList>
    </citation>
    <scope>FUNCTION</scope>
    <scope>PATHWAY</scope>
</reference>
<reference key="4">
    <citation type="journal article" date="2006" name="Nat. Biotechnol.">
        <title>ORFeome cloning and global analysis of protein localization in the fission yeast Schizosaccharomyces pombe.</title>
        <authorList>
            <person name="Matsuyama A."/>
            <person name="Arai R."/>
            <person name="Yashiroda Y."/>
            <person name="Shirai A."/>
            <person name="Kamata A."/>
            <person name="Sekido S."/>
            <person name="Kobayashi Y."/>
            <person name="Hashimoto A."/>
            <person name="Hamamoto M."/>
            <person name="Hiraoka Y."/>
            <person name="Horinouchi S."/>
            <person name="Yoshida M."/>
        </authorList>
    </citation>
    <scope>SUBCELLULAR LOCATION [LARGE SCALE ANALYSIS]</scope>
</reference>
<name>CARA_SCHPO</name>
<proteinExistence type="inferred from homology"/>
<evidence type="ECO:0000250" key="1">
    <source>
        <dbReference type="UniProtKB" id="P0A6F1"/>
    </source>
</evidence>
<evidence type="ECO:0000250" key="2">
    <source>
        <dbReference type="UniProtKB" id="P22572"/>
    </source>
</evidence>
<evidence type="ECO:0000255" key="3"/>
<evidence type="ECO:0000255" key="4">
    <source>
        <dbReference type="PROSITE-ProRule" id="PRU00605"/>
    </source>
</evidence>
<evidence type="ECO:0000269" key="5">
    <source>
    </source>
</evidence>
<evidence type="ECO:0000269" key="6">
    <source>
    </source>
</evidence>
<evidence type="ECO:0000269" key="7">
    <source ref="3"/>
</evidence>
<evidence type="ECO:0000305" key="8"/>
<evidence type="ECO:0000305" key="9">
    <source>
    </source>
</evidence>
<evidence type="ECO:0000305" key="10">
    <source ref="3"/>
</evidence>
<accession>O60060</accession>
<comment type="function">
    <text evidence="2 7">Small subunit of the arginine-specific carbamoyl phosphate synthase (CPSase). CPSase catalyzes the formation of carbamoyl phosphate from the ammonia moiety of glutamine, carbonate, and phosphate donated by ATP, the first step of the arginine biosynthetic pathway (Ref.3). The small subunit (glutamine amidotransferase) binds and cleaves glutamine to supply the large subunit with the substrate ammonia (By similarity).</text>
</comment>
<comment type="catalytic activity">
    <reaction evidence="2">
        <text>hydrogencarbonate + L-glutamine + 2 ATP + H2O = carbamoyl phosphate + L-glutamate + 2 ADP + phosphate + 2 H(+)</text>
        <dbReference type="Rhea" id="RHEA:18633"/>
        <dbReference type="ChEBI" id="CHEBI:15377"/>
        <dbReference type="ChEBI" id="CHEBI:15378"/>
        <dbReference type="ChEBI" id="CHEBI:17544"/>
        <dbReference type="ChEBI" id="CHEBI:29985"/>
        <dbReference type="ChEBI" id="CHEBI:30616"/>
        <dbReference type="ChEBI" id="CHEBI:43474"/>
        <dbReference type="ChEBI" id="CHEBI:58228"/>
        <dbReference type="ChEBI" id="CHEBI:58359"/>
        <dbReference type="ChEBI" id="CHEBI:456216"/>
        <dbReference type="EC" id="6.3.5.5"/>
    </reaction>
</comment>
<comment type="catalytic activity">
    <molecule>Carbamoyl phosphate synthase arginine-specific small chain</molecule>
    <reaction evidence="2">
        <text>L-glutamine + H2O = L-glutamate + NH4(+)</text>
        <dbReference type="Rhea" id="RHEA:15889"/>
        <dbReference type="ChEBI" id="CHEBI:15377"/>
        <dbReference type="ChEBI" id="CHEBI:28938"/>
        <dbReference type="ChEBI" id="CHEBI:29985"/>
        <dbReference type="ChEBI" id="CHEBI:58359"/>
    </reaction>
</comment>
<comment type="pathway">
    <text evidence="10">Amino-acid biosynthesis; L-arginine biosynthesis; carbamoyl phosphate from bicarbonate: step 1/1.</text>
</comment>
<comment type="subunit">
    <text evidence="2">Heterodimer composed of 2 chains; the small (or glutamine) chain promotes the hydrolysis of glutamine to ammonia, which is used by the large (or ammonia) chain to synthesize carbamoyl phosphate.</text>
</comment>
<comment type="subcellular location">
    <subcellularLocation>
        <location evidence="6">Mitochondrion</location>
    </subcellularLocation>
    <subcellularLocation>
        <location evidence="5">Cytoplasm</location>
    </subcellularLocation>
</comment>
<comment type="miscellaneous">
    <text evidence="9 10">In S.pombe, this enzyme is synthesized by two pathway-specific (arginine and pyrimidine) genes under separate control. One is linked to the arginine pathway and is designated CPSase A (arg5-arg4), it is localized to mitochondria and repressed by arginine. A second one, CPSase P, is part of a multifunctional protein (ura1) encoding 3 enzymatic activities of the pyrimidine pathway (GATase, CPSase, and ATCase); it is localized to the cytoplasm and feedback inhibited and repressed by pyrimidines. The carbamoyl phosphate synthesized by each synthase is channeled to its respective pathway, in contrast to Saccharomyces cerevisiae, in which the 2 synthases are localized to the cytoplasm and appear to contribute to the formation of a single cellular pool of carbamoyl phosphate.</text>
</comment>
<comment type="similarity">
    <text evidence="8">Belongs to the CarA family.</text>
</comment>
<protein>
    <recommendedName>
        <fullName>Carbamoyl phosphate synthase arginine-specific small chain</fullName>
        <shortName>CPS-A</shortName>
        <ecNumber evidence="2">6.3.5.5</ecNumber>
    </recommendedName>
    <alternativeName>
        <fullName>Arginine-specific carbamoyl phosphate synthetase, glutamine chain</fullName>
    </alternativeName>
</protein>
<gene>
    <name type="primary">arg5</name>
    <name type="synonym">cpa1</name>
    <name type="ORF">SPBC56F2.09c</name>
</gene>
<dbReference type="EC" id="6.3.5.5" evidence="2"/>
<dbReference type="EMBL" id="CU329671">
    <property type="protein sequence ID" value="CAA18888.1"/>
    <property type="molecule type" value="Genomic_DNA"/>
</dbReference>
<dbReference type="PIR" id="T40535">
    <property type="entry name" value="T40535"/>
</dbReference>
<dbReference type="RefSeq" id="NP_596708.1">
    <property type="nucleotide sequence ID" value="NM_001022633.2"/>
</dbReference>
<dbReference type="SMR" id="O60060"/>
<dbReference type="BioGRID" id="277575">
    <property type="interactions" value="5"/>
</dbReference>
<dbReference type="FunCoup" id="O60060">
    <property type="interactions" value="363"/>
</dbReference>
<dbReference type="STRING" id="284812.O60060"/>
<dbReference type="PaxDb" id="4896-SPBC56F2.09c.1"/>
<dbReference type="EnsemblFungi" id="SPBC56F2.09c.1">
    <property type="protein sequence ID" value="SPBC56F2.09c.1:pep"/>
    <property type="gene ID" value="SPBC56F2.09c"/>
</dbReference>
<dbReference type="GeneID" id="2541060"/>
<dbReference type="KEGG" id="spo:2541060"/>
<dbReference type="PomBase" id="SPBC56F2.09c">
    <property type="gene designation" value="arg5"/>
</dbReference>
<dbReference type="VEuPathDB" id="FungiDB:SPBC56F2.09c"/>
<dbReference type="eggNOG" id="KOG0370">
    <property type="taxonomic scope" value="Eukaryota"/>
</dbReference>
<dbReference type="HOGENOM" id="CLU_035901_1_0_1"/>
<dbReference type="InParanoid" id="O60060"/>
<dbReference type="OMA" id="CFSVQYH"/>
<dbReference type="PhylomeDB" id="O60060"/>
<dbReference type="UniPathway" id="UPA00068">
    <property type="reaction ID" value="UER00171"/>
</dbReference>
<dbReference type="PRO" id="PR:O60060"/>
<dbReference type="Proteomes" id="UP000002485">
    <property type="component" value="Chromosome II"/>
</dbReference>
<dbReference type="GO" id="GO:0005951">
    <property type="term" value="C:carbamoyl-phosphate synthase complex"/>
    <property type="evidence" value="ECO:0000318"/>
    <property type="project" value="GO_Central"/>
</dbReference>
<dbReference type="GO" id="GO:0005737">
    <property type="term" value="C:cytoplasm"/>
    <property type="evidence" value="ECO:0007005"/>
    <property type="project" value="PomBase"/>
</dbReference>
<dbReference type="GO" id="GO:0005739">
    <property type="term" value="C:mitochondrion"/>
    <property type="evidence" value="ECO:0000305"/>
    <property type="project" value="PomBase"/>
</dbReference>
<dbReference type="GO" id="GO:0005524">
    <property type="term" value="F:ATP binding"/>
    <property type="evidence" value="ECO:0007669"/>
    <property type="project" value="UniProtKB-KW"/>
</dbReference>
<dbReference type="GO" id="GO:0004088">
    <property type="term" value="F:carbamoyl-phosphate synthase (glutamine-hydrolyzing) activity"/>
    <property type="evidence" value="ECO:0007669"/>
    <property type="project" value="UniProtKB-EC"/>
</dbReference>
<dbReference type="GO" id="GO:0004359">
    <property type="term" value="F:glutaminase activity"/>
    <property type="evidence" value="ECO:0007669"/>
    <property type="project" value="RHEA"/>
</dbReference>
<dbReference type="GO" id="GO:0006207">
    <property type="term" value="P:'de novo' pyrimidine nucleobase biosynthetic process"/>
    <property type="evidence" value="ECO:0007669"/>
    <property type="project" value="InterPro"/>
</dbReference>
<dbReference type="GO" id="GO:0042450">
    <property type="term" value="P:arginine biosynthetic process via ornithine"/>
    <property type="evidence" value="ECO:0000269"/>
    <property type="project" value="PomBase"/>
</dbReference>
<dbReference type="GO" id="GO:0006541">
    <property type="term" value="P:glutamine metabolic process"/>
    <property type="evidence" value="ECO:0007669"/>
    <property type="project" value="InterPro"/>
</dbReference>
<dbReference type="GO" id="GO:0006526">
    <property type="term" value="P:L-arginine biosynthetic process"/>
    <property type="evidence" value="ECO:0000269"/>
    <property type="project" value="PomBase"/>
</dbReference>
<dbReference type="GO" id="GO:0000050">
    <property type="term" value="P:urea cycle"/>
    <property type="evidence" value="ECO:0000305"/>
    <property type="project" value="PomBase"/>
</dbReference>
<dbReference type="CDD" id="cd01744">
    <property type="entry name" value="GATase1_CPSase"/>
    <property type="match status" value="1"/>
</dbReference>
<dbReference type="FunFam" id="3.40.50.880:FF:000016">
    <property type="entry name" value="Carbamoyl-phosphate synthase arginine-specific small chain"/>
    <property type="match status" value="1"/>
</dbReference>
<dbReference type="FunFam" id="3.50.30.20:FF:000003">
    <property type="entry name" value="Carbamoyl-phosphate synthase arginine-specific small chain"/>
    <property type="match status" value="1"/>
</dbReference>
<dbReference type="Gene3D" id="3.40.50.880">
    <property type="match status" value="1"/>
</dbReference>
<dbReference type="Gene3D" id="3.50.30.20">
    <property type="entry name" value="Carbamoyl-phosphate synthase small subunit, N-terminal domain"/>
    <property type="match status" value="1"/>
</dbReference>
<dbReference type="HAMAP" id="MF_01209">
    <property type="entry name" value="CPSase_S_chain"/>
    <property type="match status" value="1"/>
</dbReference>
<dbReference type="InterPro" id="IPR050472">
    <property type="entry name" value="Anth_synth/Amidotransfase"/>
</dbReference>
<dbReference type="InterPro" id="IPR006274">
    <property type="entry name" value="CarbamoylP_synth_ssu"/>
</dbReference>
<dbReference type="InterPro" id="IPR002474">
    <property type="entry name" value="CarbamoylP_synth_ssu_N"/>
</dbReference>
<dbReference type="InterPro" id="IPR036480">
    <property type="entry name" value="CarbP_synth_ssu_N_sf"/>
</dbReference>
<dbReference type="InterPro" id="IPR029062">
    <property type="entry name" value="Class_I_gatase-like"/>
</dbReference>
<dbReference type="InterPro" id="IPR035686">
    <property type="entry name" value="CPSase_GATase1"/>
</dbReference>
<dbReference type="InterPro" id="IPR017926">
    <property type="entry name" value="GATASE"/>
</dbReference>
<dbReference type="NCBIfam" id="TIGR01368">
    <property type="entry name" value="CPSaseIIsmall"/>
    <property type="match status" value="1"/>
</dbReference>
<dbReference type="NCBIfam" id="NF009475">
    <property type="entry name" value="PRK12838.1"/>
    <property type="match status" value="1"/>
</dbReference>
<dbReference type="PANTHER" id="PTHR43418:SF7">
    <property type="entry name" value="CARBAMOYL-PHOSPHATE SYNTHASE SMALL CHAIN"/>
    <property type="match status" value="1"/>
</dbReference>
<dbReference type="PANTHER" id="PTHR43418">
    <property type="entry name" value="MULTIFUNCTIONAL TRYPTOPHAN BIOSYNTHESIS PROTEIN-RELATED"/>
    <property type="match status" value="1"/>
</dbReference>
<dbReference type="Pfam" id="PF00988">
    <property type="entry name" value="CPSase_sm_chain"/>
    <property type="match status" value="1"/>
</dbReference>
<dbReference type="Pfam" id="PF00117">
    <property type="entry name" value="GATase"/>
    <property type="match status" value="1"/>
</dbReference>
<dbReference type="PRINTS" id="PR00097">
    <property type="entry name" value="ANTSNTHASEII"/>
</dbReference>
<dbReference type="PRINTS" id="PR00099">
    <property type="entry name" value="CPSGATASE"/>
</dbReference>
<dbReference type="PRINTS" id="PR00096">
    <property type="entry name" value="GATASE"/>
</dbReference>
<dbReference type="SMART" id="SM01097">
    <property type="entry name" value="CPSase_sm_chain"/>
    <property type="match status" value="1"/>
</dbReference>
<dbReference type="SUPFAM" id="SSF52021">
    <property type="entry name" value="Carbamoyl phosphate synthetase, small subunit N-terminal domain"/>
    <property type="match status" value="1"/>
</dbReference>
<dbReference type="SUPFAM" id="SSF52317">
    <property type="entry name" value="Class I glutamine amidotransferase-like"/>
    <property type="match status" value="1"/>
</dbReference>
<dbReference type="PROSITE" id="PS51273">
    <property type="entry name" value="GATASE_TYPE_1"/>
    <property type="match status" value="1"/>
</dbReference>
<organism>
    <name type="scientific">Schizosaccharomyces pombe (strain 972 / ATCC 24843)</name>
    <name type="common">Fission yeast</name>
    <dbReference type="NCBI Taxonomy" id="284812"/>
    <lineage>
        <taxon>Eukaryota</taxon>
        <taxon>Fungi</taxon>
        <taxon>Dikarya</taxon>
        <taxon>Ascomycota</taxon>
        <taxon>Taphrinomycotina</taxon>
        <taxon>Schizosaccharomycetes</taxon>
        <taxon>Schizosaccharomycetales</taxon>
        <taxon>Schizosaccharomycetaceae</taxon>
        <taxon>Schizosaccharomyces</taxon>
    </lineage>
</organism>